<dbReference type="EMBL" id="L42023">
    <property type="protein sequence ID" value="AAC22736.1"/>
    <property type="molecule type" value="Genomic_DNA"/>
</dbReference>
<dbReference type="PIR" id="I64181">
    <property type="entry name" value="I64181"/>
</dbReference>
<dbReference type="RefSeq" id="NP_439237.1">
    <property type="nucleotide sequence ID" value="NC_000907.1"/>
</dbReference>
<dbReference type="SMR" id="P45024"/>
<dbReference type="STRING" id="71421.HI_1080"/>
<dbReference type="EnsemblBacteria" id="AAC22736">
    <property type="protein sequence ID" value="AAC22736"/>
    <property type="gene ID" value="HI_1080"/>
</dbReference>
<dbReference type="KEGG" id="hin:HI_1080"/>
<dbReference type="PATRIC" id="fig|71421.8.peg.1125"/>
<dbReference type="eggNOG" id="COG0834">
    <property type="taxonomic scope" value="Bacteria"/>
</dbReference>
<dbReference type="HOGENOM" id="CLU_019602_18_5_6"/>
<dbReference type="OrthoDB" id="368476at2"/>
<dbReference type="PhylomeDB" id="P45024"/>
<dbReference type="BioCyc" id="HINF71421:G1GJ1-1115-MONOMER"/>
<dbReference type="Proteomes" id="UP000000579">
    <property type="component" value="Chromosome"/>
</dbReference>
<dbReference type="GO" id="GO:0042597">
    <property type="term" value="C:periplasmic space"/>
    <property type="evidence" value="ECO:0007669"/>
    <property type="project" value="UniProtKB-SubCell"/>
</dbReference>
<dbReference type="GO" id="GO:0006865">
    <property type="term" value="P:amino acid transport"/>
    <property type="evidence" value="ECO:0007669"/>
    <property type="project" value="UniProtKB-KW"/>
</dbReference>
<dbReference type="CDD" id="cd13711">
    <property type="entry name" value="PBP2_Ngo0372_TcyA"/>
    <property type="match status" value="1"/>
</dbReference>
<dbReference type="Gene3D" id="3.40.190.10">
    <property type="entry name" value="Periplasmic binding protein-like II"/>
    <property type="match status" value="2"/>
</dbReference>
<dbReference type="InterPro" id="IPR018313">
    <property type="entry name" value="SBP_3_CS"/>
</dbReference>
<dbReference type="InterPro" id="IPR001638">
    <property type="entry name" value="Solute-binding_3/MltF_N"/>
</dbReference>
<dbReference type="PANTHER" id="PTHR35936:SF35">
    <property type="entry name" value="L-CYSTINE-BINDING PROTEIN TCYJ"/>
    <property type="match status" value="1"/>
</dbReference>
<dbReference type="PANTHER" id="PTHR35936">
    <property type="entry name" value="MEMBRANE-BOUND LYTIC MUREIN TRANSGLYCOSYLASE F"/>
    <property type="match status" value="1"/>
</dbReference>
<dbReference type="Pfam" id="PF00497">
    <property type="entry name" value="SBP_bac_3"/>
    <property type="match status" value="1"/>
</dbReference>
<dbReference type="SMART" id="SM00062">
    <property type="entry name" value="PBPb"/>
    <property type="match status" value="1"/>
</dbReference>
<dbReference type="SUPFAM" id="SSF53850">
    <property type="entry name" value="Periplasmic binding protein-like II"/>
    <property type="match status" value="1"/>
</dbReference>
<dbReference type="PROSITE" id="PS01039">
    <property type="entry name" value="SBP_BACTERIAL_3"/>
    <property type="match status" value="1"/>
</dbReference>
<accession>P45024</accession>
<gene>
    <name type="ordered locus">HI_1080</name>
</gene>
<organism>
    <name type="scientific">Haemophilus influenzae (strain ATCC 51907 / DSM 11121 / KW20 / Rd)</name>
    <dbReference type="NCBI Taxonomy" id="71421"/>
    <lineage>
        <taxon>Bacteria</taxon>
        <taxon>Pseudomonadati</taxon>
        <taxon>Pseudomonadota</taxon>
        <taxon>Gammaproteobacteria</taxon>
        <taxon>Pasteurellales</taxon>
        <taxon>Pasteurellaceae</taxon>
        <taxon>Haemophilus</taxon>
    </lineage>
</organism>
<evidence type="ECO:0000255" key="1"/>
<evidence type="ECO:0000305" key="2"/>
<feature type="signal peptide" evidence="1">
    <location>
        <begin position="1"/>
        <end position="23"/>
    </location>
</feature>
<feature type="chain" id="PRO_0000031776" description="Probable amino-acid ABC transporter-binding protein HI_1080">
    <location>
        <begin position="24"/>
        <end position="257"/>
    </location>
</feature>
<sequence>MKKLLFTTALLTGAIAFSTFSHAGEIADRVEKTKTLLVGTEGTYAPFTFHDKSGKLTGFDVEVIRKVAEKLGLKVEFKETQWDAMYAGLNAKRFDVIANQTNPSPERLKKYSFTTPYNYSGGVIVTKSSDNSIKSFEDLKGRKSAQSATSNWGKDAKAAGAQILVVDGLAQSLELIKQGRAEATINDKLAVLDYFKQHPNSGLKIAYDRGDKTPTAFAFLQGEDALITKFNQVLEALRQDGTLKQISIEWFGYDITQ</sequence>
<name>Y1080_HAEIN</name>
<keyword id="KW-0029">Amino-acid transport</keyword>
<keyword id="KW-0574">Periplasm</keyword>
<keyword id="KW-1185">Reference proteome</keyword>
<keyword id="KW-0732">Signal</keyword>
<keyword id="KW-0813">Transport</keyword>
<proteinExistence type="evidence at protein level"/>
<reference key="1">
    <citation type="journal article" date="1995" name="Science">
        <title>Whole-genome random sequencing and assembly of Haemophilus influenzae Rd.</title>
        <authorList>
            <person name="Fleischmann R.D."/>
            <person name="Adams M.D."/>
            <person name="White O."/>
            <person name="Clayton R.A."/>
            <person name="Kirkness E.F."/>
            <person name="Kerlavage A.R."/>
            <person name="Bult C.J."/>
            <person name="Tomb J.-F."/>
            <person name="Dougherty B.A."/>
            <person name="Merrick J.M."/>
            <person name="McKenney K."/>
            <person name="Sutton G.G."/>
            <person name="FitzHugh W."/>
            <person name="Fields C.A."/>
            <person name="Gocayne J.D."/>
            <person name="Scott J.D."/>
            <person name="Shirley R."/>
            <person name="Liu L.-I."/>
            <person name="Glodek A."/>
            <person name="Kelley J.M."/>
            <person name="Weidman J.F."/>
            <person name="Phillips C.A."/>
            <person name="Spriggs T."/>
            <person name="Hedblom E."/>
            <person name="Cotton M.D."/>
            <person name="Utterback T.R."/>
            <person name="Hanna M.C."/>
            <person name="Nguyen D.T."/>
            <person name="Saudek D.M."/>
            <person name="Brandon R.C."/>
            <person name="Fine L.D."/>
            <person name="Fritchman J.L."/>
            <person name="Fuhrmann J.L."/>
            <person name="Geoghagen N.S.M."/>
            <person name="Gnehm C.L."/>
            <person name="McDonald L.A."/>
            <person name="Small K.V."/>
            <person name="Fraser C.M."/>
            <person name="Smith H.O."/>
            <person name="Venter J.C."/>
        </authorList>
    </citation>
    <scope>NUCLEOTIDE SEQUENCE [LARGE SCALE GENOMIC DNA]</scope>
    <source>
        <strain>ATCC 51907 / DSM 11121 / KW20 / Rd</strain>
    </source>
</reference>
<reference key="2">
    <citation type="journal article" date="2000" name="Electrophoresis">
        <title>Two-dimensional map of the proteome of Haemophilus influenzae.</title>
        <authorList>
            <person name="Langen H."/>
            <person name="Takacs B."/>
            <person name="Evers S."/>
            <person name="Berndt P."/>
            <person name="Lahm H.W."/>
            <person name="Wipf B."/>
            <person name="Gray C."/>
            <person name="Fountoulakis M."/>
        </authorList>
    </citation>
    <scope>IDENTIFICATION BY MASS SPECTROMETRY</scope>
    <source>
        <strain>ATCC 51907 / DSM 11121 / KW20 / Rd</strain>
    </source>
</reference>
<comment type="function">
    <text>Probably part of a binding-protein-dependent transport system for an amino acid.</text>
</comment>
<comment type="subcellular location">
    <subcellularLocation>
        <location evidence="2">Periplasm</location>
    </subcellularLocation>
</comment>
<comment type="similarity">
    <text evidence="2">Belongs to the bacterial solute-binding protein 3 family.</text>
</comment>
<protein>
    <recommendedName>
        <fullName>Probable amino-acid ABC transporter-binding protein HI_1080</fullName>
    </recommendedName>
</protein>